<gene>
    <name evidence="1" type="primary">trpD</name>
    <name type="ordered locus">AnaeK_4170</name>
</gene>
<sequence>MIQQAIAKVLEGEDLTRAEAASVMTEIADGGATPAQSGAFLAALRMKGETVDEIAGAADVMRQRADRVRVDRDVFIDTCGTGGDGRHTFNISTTAAFVAAGAGVCVAKHGNRAVSSRSGSADVLAALGVNVDADKETVERCIEEVGIGFLFAVRLHPAFKAIAGVRRELGVRTIFNLLGPLANPAGARHQVLGVYEARWVPVLGGVLAALGAAHAFVVHGEGLDEIAVTGMTHVCEVRDGQVERYTIRPEDLGLPRRDAAELVGGDAAANARIVTDVLEGQAGGPRDAVLANAAAALVCAGAAKDLRDGVARAARSIDSGAAREKLRQLVAATTVPA</sequence>
<name>TRPD_ANASK</name>
<accession>B4UHD1</accession>
<proteinExistence type="inferred from homology"/>
<evidence type="ECO:0000255" key="1">
    <source>
        <dbReference type="HAMAP-Rule" id="MF_00211"/>
    </source>
</evidence>
<feature type="chain" id="PRO_1000099777" description="Anthranilate phosphoribosyltransferase">
    <location>
        <begin position="1"/>
        <end position="337"/>
    </location>
</feature>
<feature type="binding site" evidence="1">
    <location>
        <position position="80"/>
    </location>
    <ligand>
        <name>5-phospho-alpha-D-ribose 1-diphosphate</name>
        <dbReference type="ChEBI" id="CHEBI:58017"/>
    </ligand>
</feature>
<feature type="binding site" evidence="1">
    <location>
        <position position="80"/>
    </location>
    <ligand>
        <name>anthranilate</name>
        <dbReference type="ChEBI" id="CHEBI:16567"/>
        <label>1</label>
    </ligand>
</feature>
<feature type="binding site" evidence="1">
    <location>
        <begin position="83"/>
        <end position="84"/>
    </location>
    <ligand>
        <name>5-phospho-alpha-D-ribose 1-diphosphate</name>
        <dbReference type="ChEBI" id="CHEBI:58017"/>
    </ligand>
</feature>
<feature type="binding site" evidence="1">
    <location>
        <position position="88"/>
    </location>
    <ligand>
        <name>5-phospho-alpha-D-ribose 1-diphosphate</name>
        <dbReference type="ChEBI" id="CHEBI:58017"/>
    </ligand>
</feature>
<feature type="binding site" evidence="1">
    <location>
        <begin position="90"/>
        <end position="93"/>
    </location>
    <ligand>
        <name>5-phospho-alpha-D-ribose 1-diphosphate</name>
        <dbReference type="ChEBI" id="CHEBI:58017"/>
    </ligand>
</feature>
<feature type="binding site" evidence="1">
    <location>
        <position position="92"/>
    </location>
    <ligand>
        <name>Mg(2+)</name>
        <dbReference type="ChEBI" id="CHEBI:18420"/>
        <label>1</label>
    </ligand>
</feature>
<feature type="binding site" evidence="1">
    <location>
        <begin position="108"/>
        <end position="116"/>
    </location>
    <ligand>
        <name>5-phospho-alpha-D-ribose 1-diphosphate</name>
        <dbReference type="ChEBI" id="CHEBI:58017"/>
    </ligand>
</feature>
<feature type="binding site" evidence="1">
    <location>
        <position position="111"/>
    </location>
    <ligand>
        <name>anthranilate</name>
        <dbReference type="ChEBI" id="CHEBI:16567"/>
        <label>1</label>
    </ligand>
</feature>
<feature type="binding site" evidence="1">
    <location>
        <position position="120"/>
    </location>
    <ligand>
        <name>5-phospho-alpha-D-ribose 1-diphosphate</name>
        <dbReference type="ChEBI" id="CHEBI:58017"/>
    </ligand>
</feature>
<feature type="binding site" evidence="1">
    <location>
        <position position="166"/>
    </location>
    <ligand>
        <name>anthranilate</name>
        <dbReference type="ChEBI" id="CHEBI:16567"/>
        <label>2</label>
    </ligand>
</feature>
<feature type="binding site" evidence="1">
    <location>
        <position position="224"/>
    </location>
    <ligand>
        <name>Mg(2+)</name>
        <dbReference type="ChEBI" id="CHEBI:18420"/>
        <label>2</label>
    </ligand>
</feature>
<feature type="binding site" evidence="1">
    <location>
        <position position="225"/>
    </location>
    <ligand>
        <name>Mg(2+)</name>
        <dbReference type="ChEBI" id="CHEBI:18420"/>
        <label>1</label>
    </ligand>
</feature>
<feature type="binding site" evidence="1">
    <location>
        <position position="225"/>
    </location>
    <ligand>
        <name>Mg(2+)</name>
        <dbReference type="ChEBI" id="CHEBI:18420"/>
        <label>2</label>
    </ligand>
</feature>
<protein>
    <recommendedName>
        <fullName evidence="1">Anthranilate phosphoribosyltransferase</fullName>
        <ecNumber evidence="1">2.4.2.18</ecNumber>
    </recommendedName>
</protein>
<organism>
    <name type="scientific">Anaeromyxobacter sp. (strain K)</name>
    <dbReference type="NCBI Taxonomy" id="447217"/>
    <lineage>
        <taxon>Bacteria</taxon>
        <taxon>Pseudomonadati</taxon>
        <taxon>Myxococcota</taxon>
        <taxon>Myxococcia</taxon>
        <taxon>Myxococcales</taxon>
        <taxon>Cystobacterineae</taxon>
        <taxon>Anaeromyxobacteraceae</taxon>
        <taxon>Anaeromyxobacter</taxon>
    </lineage>
</organism>
<reference key="1">
    <citation type="submission" date="2008-08" db="EMBL/GenBank/DDBJ databases">
        <title>Complete sequence of Anaeromyxobacter sp. K.</title>
        <authorList>
            <consortium name="US DOE Joint Genome Institute"/>
            <person name="Lucas S."/>
            <person name="Copeland A."/>
            <person name="Lapidus A."/>
            <person name="Glavina del Rio T."/>
            <person name="Dalin E."/>
            <person name="Tice H."/>
            <person name="Bruce D."/>
            <person name="Goodwin L."/>
            <person name="Pitluck S."/>
            <person name="Saunders E."/>
            <person name="Brettin T."/>
            <person name="Detter J.C."/>
            <person name="Han C."/>
            <person name="Larimer F."/>
            <person name="Land M."/>
            <person name="Hauser L."/>
            <person name="Kyrpides N."/>
            <person name="Ovchinnikiva G."/>
            <person name="Beliaev A."/>
        </authorList>
    </citation>
    <scope>NUCLEOTIDE SEQUENCE [LARGE SCALE GENOMIC DNA]</scope>
    <source>
        <strain>K</strain>
    </source>
</reference>
<comment type="function">
    <text evidence="1">Catalyzes the transfer of the phosphoribosyl group of 5-phosphorylribose-1-pyrophosphate (PRPP) to anthranilate to yield N-(5'-phosphoribosyl)-anthranilate (PRA).</text>
</comment>
<comment type="catalytic activity">
    <reaction evidence="1">
        <text>N-(5-phospho-beta-D-ribosyl)anthranilate + diphosphate = 5-phospho-alpha-D-ribose 1-diphosphate + anthranilate</text>
        <dbReference type="Rhea" id="RHEA:11768"/>
        <dbReference type="ChEBI" id="CHEBI:16567"/>
        <dbReference type="ChEBI" id="CHEBI:18277"/>
        <dbReference type="ChEBI" id="CHEBI:33019"/>
        <dbReference type="ChEBI" id="CHEBI:58017"/>
        <dbReference type="EC" id="2.4.2.18"/>
    </reaction>
</comment>
<comment type="cofactor">
    <cofactor evidence="1">
        <name>Mg(2+)</name>
        <dbReference type="ChEBI" id="CHEBI:18420"/>
    </cofactor>
    <text evidence="1">Binds 2 magnesium ions per monomer.</text>
</comment>
<comment type="pathway">
    <text evidence="1">Amino-acid biosynthesis; L-tryptophan biosynthesis; L-tryptophan from chorismate: step 2/5.</text>
</comment>
<comment type="subunit">
    <text evidence="1">Homodimer.</text>
</comment>
<comment type="similarity">
    <text evidence="1">Belongs to the anthranilate phosphoribosyltransferase family.</text>
</comment>
<dbReference type="EC" id="2.4.2.18" evidence="1"/>
<dbReference type="EMBL" id="CP001131">
    <property type="protein sequence ID" value="ACG75373.1"/>
    <property type="molecule type" value="Genomic_DNA"/>
</dbReference>
<dbReference type="RefSeq" id="WP_012528126.1">
    <property type="nucleotide sequence ID" value="NC_011145.1"/>
</dbReference>
<dbReference type="SMR" id="B4UHD1"/>
<dbReference type="KEGG" id="ank:AnaeK_4170"/>
<dbReference type="HOGENOM" id="CLU_034315_2_1_7"/>
<dbReference type="OrthoDB" id="9806430at2"/>
<dbReference type="UniPathway" id="UPA00035">
    <property type="reaction ID" value="UER00041"/>
</dbReference>
<dbReference type="Proteomes" id="UP000001871">
    <property type="component" value="Chromosome"/>
</dbReference>
<dbReference type="GO" id="GO:0005829">
    <property type="term" value="C:cytosol"/>
    <property type="evidence" value="ECO:0007669"/>
    <property type="project" value="TreeGrafter"/>
</dbReference>
<dbReference type="GO" id="GO:0004048">
    <property type="term" value="F:anthranilate phosphoribosyltransferase activity"/>
    <property type="evidence" value="ECO:0007669"/>
    <property type="project" value="UniProtKB-UniRule"/>
</dbReference>
<dbReference type="GO" id="GO:0000287">
    <property type="term" value="F:magnesium ion binding"/>
    <property type="evidence" value="ECO:0007669"/>
    <property type="project" value="UniProtKB-UniRule"/>
</dbReference>
<dbReference type="GO" id="GO:0000162">
    <property type="term" value="P:L-tryptophan biosynthetic process"/>
    <property type="evidence" value="ECO:0007669"/>
    <property type="project" value="UniProtKB-UniRule"/>
</dbReference>
<dbReference type="FunFam" id="3.40.1030.10:FF:000002">
    <property type="entry name" value="Anthranilate phosphoribosyltransferase"/>
    <property type="match status" value="1"/>
</dbReference>
<dbReference type="Gene3D" id="3.40.1030.10">
    <property type="entry name" value="Nucleoside phosphorylase/phosphoribosyltransferase catalytic domain"/>
    <property type="match status" value="1"/>
</dbReference>
<dbReference type="Gene3D" id="1.20.970.10">
    <property type="entry name" value="Transferase, Pyrimidine Nucleoside Phosphorylase, Chain C"/>
    <property type="match status" value="1"/>
</dbReference>
<dbReference type="HAMAP" id="MF_00211">
    <property type="entry name" value="TrpD"/>
    <property type="match status" value="1"/>
</dbReference>
<dbReference type="InterPro" id="IPR005940">
    <property type="entry name" value="Anthranilate_Pribosyl_Tfrase"/>
</dbReference>
<dbReference type="InterPro" id="IPR000312">
    <property type="entry name" value="Glycosyl_Trfase_fam3"/>
</dbReference>
<dbReference type="InterPro" id="IPR017459">
    <property type="entry name" value="Glycosyl_Trfase_fam3_N_dom"/>
</dbReference>
<dbReference type="InterPro" id="IPR036320">
    <property type="entry name" value="Glycosyl_Trfase_fam3_N_dom_sf"/>
</dbReference>
<dbReference type="InterPro" id="IPR035902">
    <property type="entry name" value="Nuc_phospho_transferase"/>
</dbReference>
<dbReference type="NCBIfam" id="TIGR01245">
    <property type="entry name" value="trpD"/>
    <property type="match status" value="1"/>
</dbReference>
<dbReference type="PANTHER" id="PTHR43285">
    <property type="entry name" value="ANTHRANILATE PHOSPHORIBOSYLTRANSFERASE"/>
    <property type="match status" value="1"/>
</dbReference>
<dbReference type="PANTHER" id="PTHR43285:SF2">
    <property type="entry name" value="ANTHRANILATE PHOSPHORIBOSYLTRANSFERASE"/>
    <property type="match status" value="1"/>
</dbReference>
<dbReference type="Pfam" id="PF02885">
    <property type="entry name" value="Glycos_trans_3N"/>
    <property type="match status" value="1"/>
</dbReference>
<dbReference type="Pfam" id="PF00591">
    <property type="entry name" value="Glycos_transf_3"/>
    <property type="match status" value="1"/>
</dbReference>
<dbReference type="SUPFAM" id="SSF52418">
    <property type="entry name" value="Nucleoside phosphorylase/phosphoribosyltransferase catalytic domain"/>
    <property type="match status" value="1"/>
</dbReference>
<dbReference type="SUPFAM" id="SSF47648">
    <property type="entry name" value="Nucleoside phosphorylase/phosphoribosyltransferase N-terminal domain"/>
    <property type="match status" value="1"/>
</dbReference>
<keyword id="KW-0028">Amino-acid biosynthesis</keyword>
<keyword id="KW-0057">Aromatic amino acid biosynthesis</keyword>
<keyword id="KW-0328">Glycosyltransferase</keyword>
<keyword id="KW-0460">Magnesium</keyword>
<keyword id="KW-0479">Metal-binding</keyword>
<keyword id="KW-0808">Transferase</keyword>
<keyword id="KW-0822">Tryptophan biosynthesis</keyword>